<keyword id="KW-1003">Cell membrane</keyword>
<keyword id="KW-0165">Cleavage on pair of basic residues</keyword>
<keyword id="KW-1015">Disulfide bond</keyword>
<keyword id="KW-0272">Extracellular matrix</keyword>
<keyword id="KW-0278">Fertilization</keyword>
<keyword id="KW-0325">Glycoprotein</keyword>
<keyword id="KW-0472">Membrane</keyword>
<keyword id="KW-0675">Receptor</keyword>
<keyword id="KW-1185">Reference proteome</keyword>
<keyword id="KW-0964">Secreted</keyword>
<keyword id="KW-0732">Signal</keyword>
<keyword id="KW-0812">Transmembrane</keyword>
<keyword id="KW-1133">Transmembrane helix</keyword>
<evidence type="ECO:0000250" key="1"/>
<evidence type="ECO:0000250" key="2">
    <source>
        <dbReference type="UniProtKB" id="Q00193"/>
    </source>
</evidence>
<evidence type="ECO:0000255" key="3"/>
<evidence type="ECO:0000255" key="4">
    <source>
        <dbReference type="PROSITE-ProRule" id="PRU00375"/>
    </source>
</evidence>
<evidence type="ECO:0000255" key="5">
    <source>
        <dbReference type="PROSITE-ProRule" id="PRU00779"/>
    </source>
</evidence>
<evidence type="ECO:0000305" key="6"/>
<dbReference type="EMBL" id="AF456325">
    <property type="protein sequence ID" value="AAN76981.1"/>
    <property type="molecule type" value="mRNA"/>
</dbReference>
<dbReference type="SMR" id="Q8CH34"/>
<dbReference type="FunCoup" id="Q8CH34">
    <property type="interactions" value="14"/>
</dbReference>
<dbReference type="STRING" id="10116.ENSRNOP00000031597"/>
<dbReference type="GlyCosmos" id="Q8CH34">
    <property type="glycosylation" value="6 sites, No reported glycans"/>
</dbReference>
<dbReference type="GlyGen" id="Q8CH34">
    <property type="glycosylation" value="7 sites"/>
</dbReference>
<dbReference type="PhosphoSitePlus" id="Q8CH34"/>
<dbReference type="PaxDb" id="10116-ENSRNOP00000031597"/>
<dbReference type="UCSC" id="RGD:628708">
    <property type="organism name" value="rat"/>
</dbReference>
<dbReference type="AGR" id="RGD:628708"/>
<dbReference type="RGD" id="628708">
    <property type="gene designation" value="Zp4"/>
</dbReference>
<dbReference type="eggNOG" id="ENOG502QU54">
    <property type="taxonomic scope" value="Eukaryota"/>
</dbReference>
<dbReference type="InParanoid" id="Q8CH34"/>
<dbReference type="PhylomeDB" id="Q8CH34"/>
<dbReference type="PRO" id="PR:Q8CH34"/>
<dbReference type="Proteomes" id="UP000002494">
    <property type="component" value="Unplaced"/>
</dbReference>
<dbReference type="GO" id="GO:0062023">
    <property type="term" value="C:collagen-containing extracellular matrix"/>
    <property type="evidence" value="ECO:0000318"/>
    <property type="project" value="GO_Central"/>
</dbReference>
<dbReference type="GO" id="GO:0035805">
    <property type="term" value="C:egg coat"/>
    <property type="evidence" value="ECO:0000250"/>
    <property type="project" value="UniProtKB"/>
</dbReference>
<dbReference type="GO" id="GO:0005576">
    <property type="term" value="C:extracellular region"/>
    <property type="evidence" value="ECO:0007669"/>
    <property type="project" value="UniProtKB-KW"/>
</dbReference>
<dbReference type="GO" id="GO:0005886">
    <property type="term" value="C:plasma membrane"/>
    <property type="evidence" value="ECO:0007669"/>
    <property type="project" value="UniProtKB-SubCell"/>
</dbReference>
<dbReference type="GO" id="GO:0032190">
    <property type="term" value="F:acrosin binding"/>
    <property type="evidence" value="ECO:0000266"/>
    <property type="project" value="RGD"/>
</dbReference>
<dbReference type="GO" id="GO:0042802">
    <property type="term" value="F:identical protein binding"/>
    <property type="evidence" value="ECO:0000266"/>
    <property type="project" value="RGD"/>
</dbReference>
<dbReference type="GO" id="GO:0035804">
    <property type="term" value="F:structural constituent of egg coat"/>
    <property type="evidence" value="ECO:0000250"/>
    <property type="project" value="UniProtKB"/>
</dbReference>
<dbReference type="GO" id="GO:0060478">
    <property type="term" value="P:acrosomal vesicle exocytosis"/>
    <property type="evidence" value="ECO:0000266"/>
    <property type="project" value="RGD"/>
</dbReference>
<dbReference type="GO" id="GO:0007339">
    <property type="term" value="P:binding of sperm to zona pellucida"/>
    <property type="evidence" value="ECO:0000318"/>
    <property type="project" value="GO_Central"/>
</dbReference>
<dbReference type="GO" id="GO:2000360">
    <property type="term" value="P:negative regulation of binding of sperm to zona pellucida"/>
    <property type="evidence" value="ECO:0000266"/>
    <property type="project" value="RGD"/>
</dbReference>
<dbReference type="GO" id="GO:2000344">
    <property type="term" value="P:positive regulation of acrosome reaction"/>
    <property type="evidence" value="ECO:0000266"/>
    <property type="project" value="RGD"/>
</dbReference>
<dbReference type="GO" id="GO:0002922">
    <property type="term" value="P:positive regulation of humoral immune response"/>
    <property type="evidence" value="ECO:0000266"/>
    <property type="project" value="RGD"/>
</dbReference>
<dbReference type="GO" id="GO:0042102">
    <property type="term" value="P:positive regulation of T cell proliferation"/>
    <property type="evidence" value="ECO:0000266"/>
    <property type="project" value="RGD"/>
</dbReference>
<dbReference type="GO" id="GO:0060468">
    <property type="term" value="P:prevention of polyspermy"/>
    <property type="evidence" value="ECO:0000318"/>
    <property type="project" value="GO_Central"/>
</dbReference>
<dbReference type="CDD" id="cd00111">
    <property type="entry name" value="Trefoil"/>
    <property type="match status" value="1"/>
</dbReference>
<dbReference type="FunFam" id="2.60.40.4100:FF:000004">
    <property type="entry name" value="Zona pellucida sperm-binding protein 2"/>
    <property type="match status" value="1"/>
</dbReference>
<dbReference type="Gene3D" id="4.10.110.10">
    <property type="entry name" value="Spasmolytic Protein, domain 1"/>
    <property type="match status" value="1"/>
</dbReference>
<dbReference type="Gene3D" id="2.60.40.4100">
    <property type="entry name" value="Zona pellucida, ZP-C domain"/>
    <property type="match status" value="1"/>
</dbReference>
<dbReference type="Gene3D" id="2.60.40.3210">
    <property type="entry name" value="Zona pellucida, ZP-N domain"/>
    <property type="match status" value="1"/>
</dbReference>
<dbReference type="InterPro" id="IPR017957">
    <property type="entry name" value="P_trefoil_CS"/>
</dbReference>
<dbReference type="InterPro" id="IPR000519">
    <property type="entry name" value="P_trefoil_dom"/>
</dbReference>
<dbReference type="InterPro" id="IPR044913">
    <property type="entry name" value="P_trefoil_dom_sf"/>
</dbReference>
<dbReference type="InterPro" id="IPR051148">
    <property type="entry name" value="Zona_Pellucida_Domain_gp"/>
</dbReference>
<dbReference type="InterPro" id="IPR055355">
    <property type="entry name" value="ZP-C"/>
</dbReference>
<dbReference type="InterPro" id="IPR042235">
    <property type="entry name" value="ZP-C_dom"/>
</dbReference>
<dbReference type="InterPro" id="IPR055356">
    <property type="entry name" value="ZP-N"/>
</dbReference>
<dbReference type="InterPro" id="IPR054554">
    <property type="entry name" value="ZP1/4_Ig-like"/>
</dbReference>
<dbReference type="InterPro" id="IPR048290">
    <property type="entry name" value="ZP_chr"/>
</dbReference>
<dbReference type="InterPro" id="IPR001507">
    <property type="entry name" value="ZP_dom"/>
</dbReference>
<dbReference type="InterPro" id="IPR017977">
    <property type="entry name" value="ZP_dom_CS"/>
</dbReference>
<dbReference type="PANTHER" id="PTHR23343">
    <property type="entry name" value="ZONA PELLUCIDA SPERM-BINDING PROTEIN"/>
    <property type="match status" value="1"/>
</dbReference>
<dbReference type="PANTHER" id="PTHR23343:SF31">
    <property type="entry name" value="ZONA PELLUCIDA SPERM-BINDING PROTEIN 4"/>
    <property type="match status" value="1"/>
</dbReference>
<dbReference type="Pfam" id="PF00088">
    <property type="entry name" value="Trefoil"/>
    <property type="match status" value="1"/>
</dbReference>
<dbReference type="Pfam" id="PF00100">
    <property type="entry name" value="Zona_pellucida"/>
    <property type="match status" value="1"/>
</dbReference>
<dbReference type="Pfam" id="PF23344">
    <property type="entry name" value="ZP-N"/>
    <property type="match status" value="1"/>
</dbReference>
<dbReference type="Pfam" id="PF22821">
    <property type="entry name" value="ZP1_ZP4_Ig-like"/>
    <property type="match status" value="1"/>
</dbReference>
<dbReference type="PRINTS" id="PR00023">
    <property type="entry name" value="ZPELLUCIDA"/>
</dbReference>
<dbReference type="SMART" id="SM00018">
    <property type="entry name" value="PD"/>
    <property type="match status" value="1"/>
</dbReference>
<dbReference type="SMART" id="SM00241">
    <property type="entry name" value="ZP"/>
    <property type="match status" value="1"/>
</dbReference>
<dbReference type="SUPFAM" id="SSF57492">
    <property type="entry name" value="Trefoil"/>
    <property type="match status" value="1"/>
</dbReference>
<dbReference type="PROSITE" id="PS00025">
    <property type="entry name" value="P_TREFOIL_1"/>
    <property type="match status" value="1"/>
</dbReference>
<dbReference type="PROSITE" id="PS51448">
    <property type="entry name" value="P_TREFOIL_2"/>
    <property type="match status" value="1"/>
</dbReference>
<dbReference type="PROSITE" id="PS00682">
    <property type="entry name" value="ZP_1"/>
    <property type="match status" value="1"/>
</dbReference>
<dbReference type="PROSITE" id="PS51034">
    <property type="entry name" value="ZP_2"/>
    <property type="match status" value="1"/>
</dbReference>
<name>ZP4_RAT</name>
<protein>
    <recommendedName>
        <fullName>Zona pellucida sperm-binding protein 4</fullName>
    </recommendedName>
    <alternativeName>
        <fullName>Zona pellucida glycoprotein 4</fullName>
        <shortName>Zp-4</shortName>
    </alternativeName>
    <alternativeName>
        <fullName>Zona pellucida protein B</fullName>
    </alternativeName>
    <component>
        <recommendedName>
            <fullName>Processed zona pellucida sperm-binding protein 4</fullName>
        </recommendedName>
    </component>
</protein>
<organism>
    <name type="scientific">Rattus norvegicus</name>
    <name type="common">Rat</name>
    <dbReference type="NCBI Taxonomy" id="10116"/>
    <lineage>
        <taxon>Eukaryota</taxon>
        <taxon>Metazoa</taxon>
        <taxon>Chordata</taxon>
        <taxon>Craniata</taxon>
        <taxon>Vertebrata</taxon>
        <taxon>Euteleostomi</taxon>
        <taxon>Mammalia</taxon>
        <taxon>Eutheria</taxon>
        <taxon>Euarchontoglires</taxon>
        <taxon>Glires</taxon>
        <taxon>Rodentia</taxon>
        <taxon>Myomorpha</taxon>
        <taxon>Muroidea</taxon>
        <taxon>Muridae</taxon>
        <taxon>Murinae</taxon>
        <taxon>Rattus</taxon>
    </lineage>
</organism>
<reference key="1">
    <citation type="submission" date="2001-12" db="EMBL/GenBank/DDBJ databases">
        <title>Genetic determinants of the transition from the afollicular ovary to one dominated by fully-formed primordial follicles: marked increments in the ovarian expression of the rat zona pellucida 4 gene.</title>
        <authorList>
            <person name="Kuwahara A."/>
            <person name="Hennebold J.D."/>
            <person name="King G."/>
            <person name="Adashi E.Y."/>
        </authorList>
    </citation>
    <scope>NUCLEOTIDE SEQUENCE [MRNA]</scope>
    <source>
        <strain>Sprague-Dawley</strain>
    </source>
</reference>
<sequence>MARQALRSTLWLLPSILLCFPFCLPLSGQHVTELPGVLHCGLQSFQFAVNLSLEAESPVLTTWDSQGLPHRLKNDSDCGTWVMDSPDGFLVLEASYSGCYVTLEGSHYIMTVGVQEADVAGHVAGTRQRLLTCPLALQGKAPDTPNAKVCSPVPVKERLPCASSTISRGDCEELGCCYSSEEEGADSCYYGNTVTSHCTKEGHFSIAVSRDVTSPPLRLDSLRLGFRNITTGCDPVMKTSTFVLFQFPLTSCGTTQRITGDQAMYENELVAIRDVQAWGRSSITRDSNFRLRVSCTYSIHSIMSPVNMQVWTLPPPLPKTQPGPLSLELQIAQDKNYSSYYGTDAYPLVKFLQDPIYVEVSILHRTDPSLSLLLEQCWATPGSNPFHQPQWPILVKGCPYAGDNYQTKRIPVQKASDVFPSHHQRFSISTFSFMSAGREKQVLGGQVYLHCSASVCQPAGMPSCTVICPASRRRRKSELYFDNSTSISSKGPVILLQATKDPAVMLHKHSGTHADSPTLWVMGLSASMVITGVLVVSYLATRKQR</sequence>
<accession>Q8CH34</accession>
<proteinExistence type="evidence at transcript level"/>
<comment type="function">
    <text>Component of the zona pellucida, an extracellular matrix surrounding oocytes which mediates sperm binding, induction of the acrosome reaction and prevents post-fertilization polyspermy. The zona pellucida is composed of 3 to 4 glycoproteins, ZP1, ZP2, ZP3, and ZP4. ZP4 may act as a sperm receptor.</text>
</comment>
<comment type="subcellular location">
    <molecule>Processed zona pellucida sperm-binding protein 4</molecule>
    <subcellularLocation>
        <location evidence="2">Zona pellucida</location>
    </subcellularLocation>
</comment>
<comment type="subcellular location">
    <subcellularLocation>
        <location evidence="2">Cell membrane</location>
        <topology evidence="3">Single-pass type I membrane protein</topology>
    </subcellularLocation>
</comment>
<comment type="tissue specificity">
    <text>Expressed in oocytes.</text>
</comment>
<comment type="domain">
    <text>The ZP domain is involved in the polymerization of the ZP proteins to form the zona pellucida.</text>
</comment>
<comment type="PTM">
    <text>Proteolytically cleaved before the transmembrane segment to yield the secreted ectodomain incorporated in the zona pellucida.</text>
</comment>
<comment type="similarity">
    <text evidence="6">Belongs to the ZP domain family. ZPB subfamily.</text>
</comment>
<gene>
    <name type="primary">Zp4</name>
    <name type="synonym">Zpb</name>
</gene>
<feature type="signal peptide" evidence="3">
    <location>
        <begin position="1"/>
        <end position="28"/>
    </location>
</feature>
<feature type="chain" id="PRO_0000041733" description="Zona pellucida sperm-binding protein 4">
    <location>
        <begin position="29"/>
        <end position="471"/>
    </location>
</feature>
<feature type="chain" id="PRO_0000304581" description="Processed zona pellucida sperm-binding protein 4">
    <location>
        <begin position="29"/>
        <end status="unknown"/>
    </location>
</feature>
<feature type="propeptide" id="PRO_0000041734" description="Removed in mature form" evidence="1">
    <location>
        <begin position="472"/>
        <end position="545"/>
    </location>
</feature>
<feature type="topological domain" description="Extracellular" evidence="3">
    <location>
        <begin position="29"/>
        <end position="518"/>
    </location>
</feature>
<feature type="transmembrane region" description="Helical" evidence="3">
    <location>
        <begin position="519"/>
        <end position="539"/>
    </location>
</feature>
<feature type="topological domain" description="Cytoplasmic" evidence="3">
    <location>
        <begin position="540"/>
        <end position="545"/>
    </location>
</feature>
<feature type="domain" description="P-type" evidence="5">
    <location>
        <begin position="148"/>
        <end position="192"/>
    </location>
</feature>
<feature type="domain" description="ZP" evidence="4">
    <location>
        <begin position="197"/>
        <end position="471"/>
    </location>
</feature>
<feature type="glycosylation site" description="N-linked (GlcNAc...) asparagine" evidence="3">
    <location>
        <position position="50"/>
    </location>
</feature>
<feature type="glycosylation site" description="N-linked (GlcNAc...) asparagine" evidence="3">
    <location>
        <position position="74"/>
    </location>
</feature>
<feature type="glycosylation site" description="N-linked (GlcNAc...) asparagine" evidence="1">
    <location>
        <position position="228"/>
    </location>
</feature>
<feature type="glycosylation site" description="O-linked (GalNAc...) threonine" evidence="1">
    <location>
        <position position="312"/>
    </location>
</feature>
<feature type="glycosylation site" description="N-linked (GlcNAc...) asparagine" evidence="3">
    <location>
        <position position="336"/>
    </location>
</feature>
<feature type="glycosylation site" description="N-linked (GlcNAc...) asparagine" evidence="3">
    <location>
        <position position="483"/>
    </location>
</feature>
<feature type="disulfide bond" evidence="5">
    <location>
        <begin position="377"/>
        <end position="451"/>
    </location>
</feature>